<feature type="chain" id="PRO_0000441424" description="Genome polyprotein">
    <location>
        <begin position="1"/>
        <end position="3416"/>
    </location>
</feature>
<feature type="chain" id="PRO_0000441425" description="Capsid protein C" evidence="1">
    <location>
        <begin position="1"/>
        <end position="96"/>
    </location>
</feature>
<feature type="propeptide" id="PRO_0000441426" description="ER anchor for the capsid protein C, removed in mature form by serine protease NS3" evidence="1">
    <location>
        <begin position="97"/>
        <end position="117"/>
    </location>
</feature>
<feature type="chain" id="PRO_0000441427" description="Protein prM" evidence="2">
    <location>
        <begin position="118"/>
        <end position="281"/>
    </location>
</feature>
<feature type="chain" id="PRO_0000441428" description="Peptide pr" evidence="2">
    <location>
        <begin position="118"/>
        <end position="206"/>
    </location>
</feature>
<feature type="chain" id="PRO_0000441429" description="Small envelope protein M" evidence="2">
    <location>
        <begin position="207"/>
        <end position="281"/>
    </location>
</feature>
<feature type="chain" id="PRO_0000441430" description="Envelope protein E" evidence="2">
    <location>
        <begin position="282"/>
        <end position="777"/>
    </location>
</feature>
<feature type="chain" id="PRO_0000441431" description="Non-structural protein 1" evidence="1">
    <location>
        <begin position="778"/>
        <end position="1130"/>
    </location>
</feature>
<feature type="chain" id="PRO_0000441432" description="Non-structural protein 2A" evidence="2">
    <location>
        <begin position="1131"/>
        <end position="1360"/>
    </location>
</feature>
<feature type="chain" id="PRO_0000441433" description="Serine protease subunit NS2B" evidence="1">
    <location>
        <begin position="1361"/>
        <end position="1491"/>
    </location>
</feature>
<feature type="chain" id="PRO_0000441434" description="Serine protease NS3" evidence="1">
    <location>
        <begin position="1492"/>
        <end position="2112"/>
    </location>
</feature>
<feature type="chain" id="PRO_0000441435" description="Non-structural protein 4A" evidence="1">
    <location>
        <begin position="2113"/>
        <end position="2238"/>
    </location>
</feature>
<feature type="peptide" id="PRO_0000441436" description="Peptide 2k" evidence="1">
    <location>
        <begin position="2239"/>
        <end position="2261"/>
    </location>
</feature>
<feature type="chain" id="PRO_0000441437" description="Non-structural protein 4B" evidence="1">
    <location>
        <begin position="2262"/>
        <end position="2513"/>
    </location>
</feature>
<feature type="chain" id="PRO_0000441438" description="RNA-directed RNA polymerase NS5" evidence="1">
    <location>
        <begin position="2514"/>
        <end position="3416"/>
    </location>
</feature>
<feature type="topological domain" description="Cytoplasmic" evidence="10">
    <location>
        <begin position="1"/>
        <end position="99"/>
    </location>
</feature>
<feature type="transmembrane region" description="Helical" evidence="10">
    <location>
        <begin position="100"/>
        <end position="120"/>
    </location>
</feature>
<feature type="topological domain" description="Extracellular" evidence="10">
    <location>
        <begin position="121"/>
        <end position="243"/>
    </location>
</feature>
<feature type="transmembrane region" description="Helical" evidence="19">
    <location>
        <begin position="244"/>
        <end position="261"/>
    </location>
</feature>
<feature type="topological domain" description="Cytoplasmic" evidence="10">
    <location>
        <position position="262"/>
    </location>
</feature>
<feature type="transmembrane region" description="Helical" evidence="19">
    <location>
        <begin position="263"/>
        <end position="281"/>
    </location>
</feature>
<feature type="topological domain" description="Extracellular" evidence="10">
    <location>
        <begin position="282"/>
        <end position="728"/>
    </location>
</feature>
<feature type="transmembrane region" description="Helical" evidence="10">
    <location>
        <begin position="729"/>
        <end position="749"/>
    </location>
</feature>
<feature type="topological domain" description="Cytoplasmic" evidence="10">
    <location>
        <begin position="750"/>
        <end position="756"/>
    </location>
</feature>
<feature type="transmembrane region" description="Helical" evidence="10">
    <location>
        <begin position="757"/>
        <end position="777"/>
    </location>
</feature>
<feature type="topological domain" description="Extracellular" evidence="10">
    <location>
        <begin position="778"/>
        <end position="1134"/>
    </location>
</feature>
<feature type="transmembrane region" description="Helical" evidence="10">
    <location>
        <begin position="1135"/>
        <end position="1155"/>
    </location>
</feature>
<feature type="topological domain" description="Cytoplasmic" evidence="10">
    <location>
        <begin position="1156"/>
        <end position="1162"/>
    </location>
</feature>
<feature type="transmembrane region" description="Helical" evidence="10">
    <location>
        <begin position="1163"/>
        <end position="1183"/>
    </location>
</feature>
<feature type="topological domain" description="Lumenal" evidence="10">
    <location>
        <begin position="1184"/>
        <end position="1189"/>
    </location>
</feature>
<feature type="transmembrane region" description="Helical" evidence="10">
    <location>
        <begin position="1190"/>
        <end position="1210"/>
    </location>
</feature>
<feature type="topological domain" description="Cytoplasmic" evidence="10">
    <location>
        <begin position="1211"/>
        <end position="1235"/>
    </location>
</feature>
<feature type="transmembrane region" description="Helical" evidence="10">
    <location>
        <begin position="1236"/>
        <end position="1256"/>
    </location>
</feature>
<feature type="topological domain" description="Lumenal" evidence="10">
    <location>
        <begin position="1257"/>
        <end position="1295"/>
    </location>
</feature>
<feature type="transmembrane region" description="Helical" evidence="10">
    <location>
        <begin position="1296"/>
        <end position="1316"/>
    </location>
</feature>
<feature type="topological domain" description="Cytoplasmic" evidence="10">
    <location>
        <begin position="1317"/>
        <end position="1361"/>
    </location>
</feature>
<feature type="transmembrane region" description="Helical" evidence="10">
    <location>
        <begin position="1362"/>
        <end position="1379"/>
    </location>
</feature>
<feature type="topological domain" description="Lumenal" evidence="10">
    <location>
        <begin position="1380"/>
        <end position="1384"/>
    </location>
</feature>
<feature type="transmembrane region" description="Helical" evidence="10">
    <location>
        <begin position="1385"/>
        <end position="1405"/>
    </location>
</feature>
<feature type="topological domain" description="Cytoplasmic" evidence="10">
    <location>
        <begin position="1406"/>
        <end position="1458"/>
    </location>
</feature>
<feature type="intramembrane region" description="Helical" evidence="10">
    <location>
        <begin position="1459"/>
        <end position="1479"/>
    </location>
</feature>
<feature type="topological domain" description="Cytoplasmic" evidence="10">
    <location>
        <begin position="1480"/>
        <end position="2162"/>
    </location>
</feature>
<feature type="transmembrane region" description="Helical" evidence="10">
    <location>
        <begin position="2163"/>
        <end position="2183"/>
    </location>
</feature>
<feature type="topological domain" description="Lumenal" evidence="10">
    <location>
        <begin position="2184"/>
        <end position="2191"/>
    </location>
</feature>
<feature type="intramembrane region" description="Helical" evidence="10">
    <location>
        <begin position="2192"/>
        <end position="2211"/>
    </location>
</feature>
<feature type="topological domain" description="Lumenal" evidence="10">
    <location>
        <position position="2212"/>
    </location>
</feature>
<feature type="transmembrane region" description="Helical" evidence="10">
    <location>
        <begin position="2213"/>
        <end position="2233"/>
    </location>
</feature>
<feature type="topological domain" description="Cytoplasmic" evidence="10">
    <location>
        <begin position="2234"/>
        <end position="2246"/>
    </location>
</feature>
<feature type="transmembrane region" description="Helical" evidence="10">
    <location>
        <begin position="2247"/>
        <end position="2267"/>
    </location>
</feature>
<feature type="topological domain" description="Lumenal" evidence="10">
    <location>
        <begin position="2268"/>
        <end position="2301"/>
    </location>
</feature>
<feature type="intramembrane region" description="Helical" evidence="10">
    <location>
        <begin position="2302"/>
        <end position="2322"/>
    </location>
</feature>
<feature type="topological domain" description="Lumenal" evidence="10">
    <location>
        <begin position="2323"/>
        <end position="2345"/>
    </location>
</feature>
<feature type="intramembrane region" description="Helical" evidence="10">
    <location>
        <begin position="2346"/>
        <end position="2366"/>
    </location>
</feature>
<feature type="topological domain" description="Lumenal" evidence="10">
    <location>
        <begin position="2367"/>
        <end position="2368"/>
    </location>
</feature>
<feature type="transmembrane region" description="Helical" evidence="10">
    <location>
        <begin position="2369"/>
        <end position="2389"/>
    </location>
</feature>
<feature type="topological domain" description="Cytoplasmic" evidence="10">
    <location>
        <begin position="2390"/>
        <end position="2432"/>
    </location>
</feature>
<feature type="transmembrane region" description="Helical" evidence="10">
    <location>
        <begin position="2433"/>
        <end position="2453"/>
    </location>
</feature>
<feature type="topological domain" description="Lumenal" evidence="10">
    <location>
        <begin position="2454"/>
        <end position="2476"/>
    </location>
</feature>
<feature type="transmembrane region" description="Helical" evidence="10">
    <location>
        <begin position="2477"/>
        <end position="2497"/>
    </location>
</feature>
<feature type="topological domain" description="Cytoplasmic" evidence="10">
    <location>
        <begin position="2498"/>
        <end position="3416"/>
    </location>
</feature>
<feature type="domain" description="Peptidase S7" evidence="16">
    <location>
        <begin position="1492"/>
        <end position="1671"/>
    </location>
</feature>
<feature type="domain" description="Helicase ATP-binding" evidence="13">
    <location>
        <begin position="1677"/>
        <end position="1833"/>
    </location>
</feature>
<feature type="domain" description="Helicase C-terminal" evidence="14">
    <location>
        <begin position="1844"/>
        <end position="2002"/>
    </location>
</feature>
<feature type="domain" description="mRNA cap 0-1 NS5-type MT" evidence="17">
    <location>
        <begin position="2514"/>
        <end position="2778"/>
    </location>
</feature>
<feature type="domain" description="RdRp catalytic" evidence="12">
    <location>
        <begin position="3042"/>
        <end position="3191"/>
    </location>
</feature>
<feature type="region of interest" description="Disordered" evidence="18">
    <location>
        <begin position="1"/>
        <end position="34"/>
    </location>
</feature>
<feature type="region of interest" description="Fusion peptide" evidence="4">
    <location>
        <begin position="379"/>
        <end position="392"/>
    </location>
</feature>
<feature type="region of interest" description="Interacts with and activates NS3 protease" evidence="15">
    <location>
        <begin position="1412"/>
        <end position="1451"/>
    </location>
</feature>
<feature type="region of interest" description="Interaction with host SCRIB" evidence="6">
    <location>
        <begin position="2732"/>
        <end position="2736"/>
    </location>
</feature>
<feature type="short sequence motif" description="DEAH box" evidence="13">
    <location>
        <begin position="1781"/>
        <end position="1784"/>
    </location>
</feature>
<feature type="active site" description="Charge relay system; for serine protease NS3 activity" evidence="16">
    <location>
        <position position="1545"/>
    </location>
</feature>
<feature type="active site" description="Charge relay system; for serine protease NS3 activity" evidence="16">
    <location>
        <position position="1569"/>
    </location>
</feature>
<feature type="active site" description="Charge relay system; for serine protease NS3 activity" evidence="16">
    <location>
        <position position="1629"/>
    </location>
</feature>
<feature type="active site" description="For 2'-O-MTase activity" evidence="8">
    <location>
        <position position="2574"/>
    </location>
</feature>
<feature type="active site" description="For 2'-O-MTase activity" evidence="8">
    <location>
        <position position="2659"/>
    </location>
</feature>
<feature type="active site" description="For 2'-O-MTase activity" evidence="8">
    <location>
        <position position="2696"/>
    </location>
</feature>
<feature type="active site" description="For 2'-O-MTase activity" evidence="8">
    <location>
        <position position="2732"/>
    </location>
</feature>
<feature type="binding site" evidence="13">
    <location>
        <begin position="1690"/>
        <end position="1697"/>
    </location>
    <ligand>
        <name>ATP</name>
        <dbReference type="ChEBI" id="CHEBI:30616"/>
    </ligand>
</feature>
<feature type="binding site" evidence="17">
    <location>
        <position position="2569"/>
    </location>
    <ligand>
        <name>S-adenosyl-L-methionine</name>
        <dbReference type="ChEBI" id="CHEBI:59789"/>
    </ligand>
</feature>
<feature type="binding site" evidence="17">
    <location>
        <position position="2599"/>
    </location>
    <ligand>
        <name>S-adenosyl-L-methionine</name>
        <dbReference type="ChEBI" id="CHEBI:59789"/>
    </ligand>
</feature>
<feature type="binding site" evidence="17">
    <location>
        <position position="2600"/>
    </location>
    <ligand>
        <name>S-adenosyl-L-methionine</name>
        <dbReference type="ChEBI" id="CHEBI:59789"/>
    </ligand>
</feature>
<feature type="binding site" evidence="17">
    <location>
        <position position="2617"/>
    </location>
    <ligand>
        <name>S-adenosyl-L-methionine</name>
        <dbReference type="ChEBI" id="CHEBI:59789"/>
    </ligand>
</feature>
<feature type="binding site" evidence="17">
    <location>
        <position position="2618"/>
    </location>
    <ligand>
        <name>S-adenosyl-L-methionine</name>
        <dbReference type="ChEBI" id="CHEBI:59789"/>
    </ligand>
</feature>
<feature type="binding site" evidence="17">
    <location>
        <position position="2644"/>
    </location>
    <ligand>
        <name>S-adenosyl-L-methionine</name>
        <dbReference type="ChEBI" id="CHEBI:59789"/>
    </ligand>
</feature>
<feature type="binding site" evidence="17">
    <location>
        <position position="2645"/>
    </location>
    <ligand>
        <name>S-adenosyl-L-methionine</name>
        <dbReference type="ChEBI" id="CHEBI:59789"/>
    </ligand>
</feature>
<feature type="binding site" evidence="17">
    <location>
        <position position="2660"/>
    </location>
    <ligand>
        <name>S-adenosyl-L-methionine</name>
        <dbReference type="ChEBI" id="CHEBI:59789"/>
    </ligand>
</feature>
<feature type="binding site" evidence="17">
    <location>
        <position position="2734"/>
    </location>
    <ligand>
        <name>S-adenosyl-L-methionine</name>
        <dbReference type="ChEBI" id="CHEBI:59789"/>
    </ligand>
</feature>
<feature type="binding site" evidence="3">
    <location>
        <position position="2952"/>
    </location>
    <ligand>
        <name>Zn(2+)</name>
        <dbReference type="ChEBI" id="CHEBI:29105"/>
        <label>1</label>
    </ligand>
</feature>
<feature type="binding site" evidence="3">
    <location>
        <position position="2956"/>
    </location>
    <ligand>
        <name>Zn(2+)</name>
        <dbReference type="ChEBI" id="CHEBI:29105"/>
        <label>1</label>
    </ligand>
</feature>
<feature type="binding site" evidence="3">
    <location>
        <position position="2961"/>
    </location>
    <ligand>
        <name>Zn(2+)</name>
        <dbReference type="ChEBI" id="CHEBI:29105"/>
        <label>1</label>
    </ligand>
</feature>
<feature type="binding site" evidence="3">
    <location>
        <position position="2964"/>
    </location>
    <ligand>
        <name>Zn(2+)</name>
        <dbReference type="ChEBI" id="CHEBI:29105"/>
        <label>1</label>
    </ligand>
</feature>
<feature type="binding site" evidence="3">
    <location>
        <position position="3226"/>
    </location>
    <ligand>
        <name>Zn(2+)</name>
        <dbReference type="ChEBI" id="CHEBI:29105"/>
        <label>2</label>
    </ligand>
</feature>
<feature type="binding site" evidence="3">
    <location>
        <position position="3242"/>
    </location>
    <ligand>
        <name>Zn(2+)</name>
        <dbReference type="ChEBI" id="CHEBI:29105"/>
        <label>2</label>
    </ligand>
</feature>
<feature type="binding site" evidence="3">
    <location>
        <position position="3361"/>
    </location>
    <ligand>
        <name>Zn(2+)</name>
        <dbReference type="ChEBI" id="CHEBI:29105"/>
        <label>2</label>
    </ligand>
</feature>
<feature type="site" description="Cleavage; by viral protease NS3" evidence="1">
    <location>
        <begin position="97"/>
        <end position="98"/>
    </location>
</feature>
<feature type="site" description="Cleavage; by host signal peptidase" evidence="1">
    <location>
        <begin position="118"/>
        <end position="119"/>
    </location>
</feature>
<feature type="site" description="Cleavage; by host furin" evidence="2">
    <location>
        <begin position="206"/>
        <end position="207"/>
    </location>
</feature>
<feature type="site" description="Cleavage; by host signal peptidase" evidence="2">
    <location>
        <begin position="281"/>
        <end position="282"/>
    </location>
</feature>
<feature type="site" description="Cleavage; by host signal peptidase" evidence="1">
    <location>
        <begin position="777"/>
        <end position="778"/>
    </location>
</feature>
<feature type="site" description="Cleavage; by host" evidence="2">
    <location>
        <begin position="1130"/>
        <end position="1131"/>
    </location>
</feature>
<feature type="site" description="Cleavage; by viral protease NS3" evidence="2">
    <location>
        <begin position="1360"/>
        <end position="1361"/>
    </location>
</feature>
<feature type="site" description="Cleavage; by autolysis" evidence="1">
    <location>
        <begin position="1491"/>
        <end position="1492"/>
    </location>
</feature>
<feature type="site" description="Involved in NS3 ATPase and RTPase activities" evidence="3">
    <location>
        <position position="1951"/>
    </location>
</feature>
<feature type="site" description="Involved in NS3 ATPase and RTPase activities" evidence="3">
    <location>
        <position position="1954"/>
    </location>
</feature>
<feature type="site" description="Cleavage; by autolysis" evidence="1">
    <location>
        <begin position="2112"/>
        <end position="2113"/>
    </location>
</feature>
<feature type="site" description="Cleavage; by viral protease NS3" evidence="1">
    <location>
        <begin position="2238"/>
        <end position="2239"/>
    </location>
</feature>
<feature type="site" description="Cleavage; by host signal peptidase" evidence="1">
    <location>
        <begin position="2261"/>
        <end position="2262"/>
    </location>
</feature>
<feature type="site" description="Cleavage; by viral protease NS3" evidence="1">
    <location>
        <begin position="2513"/>
        <end position="2514"/>
    </location>
</feature>
<feature type="site" description="mRNA cap binding" evidence="17">
    <location>
        <position position="2526"/>
    </location>
</feature>
<feature type="site" description="mRNA cap binding; via carbonyl oxygen" evidence="17">
    <location>
        <position position="2529"/>
    </location>
</feature>
<feature type="site" description="mRNA cap binding" evidence="17">
    <location>
        <position position="2530"/>
    </location>
</feature>
<feature type="site" description="mRNA cap binding; via carbonyl oxygen" evidence="17">
    <location>
        <position position="2532"/>
    </location>
</feature>
<feature type="site" description="mRNA cap binding" evidence="17">
    <location>
        <position position="2537"/>
    </location>
</feature>
<feature type="site" description="mRNA cap binding" evidence="17">
    <location>
        <position position="2541"/>
    </location>
</feature>
<feature type="site" description="Essential for 2'-O-methyltransferase activity" evidence="17">
    <location>
        <position position="2574"/>
    </location>
</feature>
<feature type="site" description="Essential for 2'-O-methyltransferase and N-7 methyltransferase activity" evidence="17">
    <location>
        <position position="2659"/>
    </location>
</feature>
<feature type="site" description="mRNA cap binding" evidence="17">
    <location>
        <position position="2663"/>
    </location>
</feature>
<feature type="site" description="Essential for 2'-O-methyltransferase activity" evidence="17">
    <location>
        <position position="2696"/>
    </location>
</feature>
<feature type="site" description="mRNA cap binding" evidence="17">
    <location>
        <position position="2727"/>
    </location>
</feature>
<feature type="site" description="mRNA cap binding" evidence="17">
    <location>
        <position position="2729"/>
    </location>
</feature>
<feature type="site" description="Essential for 2'-O-methyltransferase activity" evidence="17">
    <location>
        <position position="2732"/>
    </location>
</feature>
<feature type="modified residue" description="N6-acetyllysine; by host" evidence="7">
    <location>
        <position position="1885"/>
    </location>
</feature>
<feature type="modified residue" description="Phosphoserine" evidence="1">
    <location>
        <position position="2569"/>
    </location>
</feature>
<feature type="glycosylation site" description="N-linked (GlcNAc...) asparagine; by host" evidence="11">
    <location>
        <position position="145"/>
    </location>
</feature>
<feature type="glycosylation site" description="N-linked (GlcNAc...) asparagine; by host" evidence="11">
    <location>
        <position position="435"/>
    </location>
</feature>
<feature type="glycosylation site" description="N-linked (GlcNAc...) asparagine; by host" evidence="11">
    <location>
        <position position="862"/>
    </location>
</feature>
<feature type="glycosylation site" description="N-linked (GlcNAc...) asparagine; by host" evidence="11">
    <location>
        <position position="985"/>
    </location>
</feature>
<feature type="glycosylation site" description="N-linked (GlcNAc...) asparagine; by host" evidence="11">
    <location>
        <position position="1001"/>
    </location>
</feature>
<feature type="disulfide bond" evidence="2">
    <location>
        <begin position="284"/>
        <end position="311"/>
    </location>
</feature>
<feature type="disulfide bond" evidence="5">
    <location>
        <begin position="341"/>
        <end position="402"/>
    </location>
</feature>
<feature type="disulfide bond" evidence="2">
    <location>
        <begin position="341"/>
        <end position="397"/>
    </location>
</feature>
<feature type="disulfide bond" evidence="2">
    <location>
        <begin position="355"/>
        <end position="386"/>
    </location>
</feature>
<feature type="disulfide bond" evidence="2">
    <location>
        <begin position="373"/>
        <end position="402"/>
    </location>
</feature>
<feature type="disulfide bond" evidence="5">
    <location>
        <begin position="373"/>
        <end position="397"/>
    </location>
</feature>
<feature type="disulfide bond" evidence="2">
    <location>
        <begin position="467"/>
        <end position="571"/>
    </location>
</feature>
<feature type="disulfide bond" evidence="2">
    <location>
        <begin position="588"/>
        <end position="619"/>
    </location>
</feature>
<feature type="disulfide bond" evidence="5">
    <location>
        <begin position="781"/>
        <end position="792"/>
    </location>
</feature>
<feature type="disulfide bond" evidence="5">
    <location>
        <begin position="832"/>
        <end position="922"/>
    </location>
</feature>
<feature type="disulfide bond" evidence="5">
    <location>
        <begin position="957"/>
        <end position="1002"/>
    </location>
</feature>
<feature type="disulfide bond" evidence="5">
    <location>
        <begin position="1059"/>
        <end position="1108"/>
    </location>
</feature>
<feature type="disulfide bond" evidence="5">
    <location>
        <begin position="1070"/>
        <end position="1092"/>
    </location>
</feature>
<feature type="disulfide bond" evidence="5">
    <location>
        <begin position="1091"/>
        <end position="1095"/>
    </location>
</feature>
<sequence>MAKGAVLKGKGGGPPRRVPKETAKKTRQGPGRLPNGLVLMRMMGVLWHMIAGTARSPILKRFWATVPVRQAIAALRKIRKTVGLLLDSLNRRRGKRRSTTGLLTSILLACLATLVISATIRRERTGDMVIRAEGKDAATQVEVVNGTCIILATDMGSWCDDSIMYECVTIDSGEEPVDVDCFCRGVERVSLEYGRCGKPVGGRSRRSVSIPVHAHSDLTGRGHKWLRGDSVKTHLTRVEGWVWKNKLLTMAFCAVVWMVTDSLPTRFIVITVALCLAPTYATRCTHLQNRDFVSGIQGTTRVSLVLELGGCVTLTAEGKPSVDVWLDDIHQENPAKTREYCLHAKLASSKVVARCPAMGPATLPEEHQASTVCRRDQSDRGWGNHCGLFGKGSIVACAKFACEAKKKATGYVYDVNKITYVVKVEPHTGDYLAANESHSNRKTASFTTQSEKTILTLGDYGDISLTCRVTSGVDPAQTVVLELDKTAEHLPKAWQVHRDWFEDLSLPWRHEGAHEWNHADRLVEFGEPHAVKMDIFNLGDQTGILLKSLAGVPVANIEGSKYHLQSGHVTCDVGLEKLKMKGMTYTVCEGSKFAWKRPPTDSGHDTVVMEVTYTGSKPCRIPVRAVAHGEPNVNVASLITPNPSMETTGGGFVELQLPPGDNIIYVGELSHQWFQKGSTIGRVLEKTRRGIERLTVVGEHAWDFGSVGGVLSSVGKALHTAFGAAFNTIFGGVGFLPRILLGVALAWLGLNSRNPTLSVGFLITGGLVLTMTLGVGADMGCAIDANRMELRCGEGLVVWREVTDWYDGYAFHPESPPVLAASLKEAYEEGVCGIVPQNRLEMAMWRRVEAVLNLALAESDANLTVVVDRRDPSDYRGGKVGILKRSGKEMKTSWKGWSQSFVWSVPESPRRFMVGIEGTGECPLDKRRTGVFTVAEFGMGMRTKIFLDLRETSSSDCDTGVMGAAVKSGHAVHTDQSLWMKSHRNATGVFISELIVTDLRNCTWPASHTLDNAGVVDSKLFLPVSLAGPRSHYNHIPGYAEQVRGPWNQTPLRVVREPCPGTTVKIDQNCDKRGSSLRSTTESGKAIPEWCCRTCELPPVTFRSGTDCWYAMEIRPVHQQGGLVRSMVLADNGAMLSEGGVPGIVAVFVVLELVIRRRPTTGTSVVWCGVVVLGLVVTGLVTIEGLCRYVVAVGILMSMELGPEIVALVLLQAVFDMRTGLLVAFAVKRAYTTREAVVTYFLLLVLELGFPEASLSNIWKWADSLAMGTLILQACSQEGRARVGYLLAAMMTQKDMAIIHTGLTIFLSAATAMAVWSMIKGQRDQKGLSWATPLVGLFGGEGVGLRLLAFRRLAERRNRRSFSEPLTVVGVMLTVASGMVRHTSQEALCALVAGAFLLLMMVLGTRKMQLIAEWCGEVEWNPDLVNEGGEVNLKVRQDAMGNLHLTEVEKEERAMALWLLAGLVASAFHWAGILIVLAIWTFFEMLSSGRRSELVFSGQGTRTERNRPFEIKDGAYRIYSPGLLWGHRQIGVGYGAKGVLHTMWHVTRGAALVVEEAISGPYWADVREDVVCYGGAWSLESRWRGETVQVHAFPPGRPQETHQCQPGELILENGRKLGAVPIDLSKGTSGSPIINAQGEVVGLYGNGLKTNEAYVSSIAQGEAEKSRPELPLSVQGTGWMSKGQITVLDMHPGSGKTHRVLPELVRQCANRGMRTLVLAPTRVVLKEMEKALAGKKVRFHSPAVEGQSTAGAVVDVMCHATYVHRRLLPQGRQNWEVAIMDEAHWTDPHSIAARGHLYSLAKENRCALVLMTATPPGRGDPFPESNGAIMSEERAIPDGEWREGFDWITEYEGRTAWFVPSISKGGAIARTLRQRGKSVICLNSKTFEKDYLRVREEKPDFVVTTDISEMGANLDVSRVIDGRTNIKPEEVDGKVEMTGTRKITTASAAQRRGRVGRTSGRTDEYIYSGQCDDDDTSLVQWKEAQILLDNITTLRGPVATFYGPEQMKMPEVAGHYRLNEEKRKHFRHLMTQCDFTPWLAWHVATNTSNVLDRSWTWQGPEGNAIDGADGDLVRFKTPGGSERVLQPVWKDCRMFREGRDVKDFILYASGRRSVGDVLGGLAGVPGLLRHRCASALDVVYTLLNENPGSRAMRMAERDAPEAFLTIVEVAVLGVATLGILWCFVARTSVSRMFLGTVVLFAALLLLWIGGVDYGYMAGIALIFYIFLTVLQPEPGKQRSSDDNRLAYFLLGLLSLAGLVTANEMGMLDKTKADLAGLMWHGEQRHPAWEEWTNVDIQPARSWGTYVLIVSLFTPYMLHQLQTKIQQLVNSSVASGAQAMRDLGGGTPFFGVAGHVIALGVTSLVGATPLSLGLGVALAAFHLAIVASGLEAELTQRAHRVFFSAMVKNPMVDGDVINPFPDGEPKPVLYERRMSLILAIALCMVSVVLNRTAASMTEAGAVGLAALGQLVHPETETLWTMPMACGMAGLVRGSFWGLLPMGHRLWLKTTGTRRGGADGETLGDIWKRRLNGCSREEFFQYRRSGVMETERDRARELLKRGETNMGLAVSRGTAKLAWLEERGYATLKGEVVDLGCGRGGWSYYAASRPAVMGVKAYTIGGKGHEVPRLITSLGWNLIKFRTGMDVYSLEAHRADTILCDIGESNPDPLVEGERSRRVILLMEKWKLRNPDASCVFKVLAPYRPEVLEALHRFQLQWGGGLVRVPFSRNSTHEMYFSTAVSGNIVNSVNIQSRKLLARFGDQRGPAKVPEVDLGTGTRCVVLAEDKVREADVAERITALKTQYGDSWHVDKEHPYRTWQYWGSYKTEATGSAASLINGVVKLLSWPWNAREDVVRMAMTDTTAFGQQRVFKEKVDTKAQEPQVGTKIIMRAVNDWILERLAGKKTPRLCTREEFIAKVRSNAALGAWSDEQNRWSNAREAVEDPEFWRLVDEERERHLRGRCAQCVYNMMGKREKKLGEFGVAKGSRAIWYMWLGSRYLEFEALGFLNEDHWASRDLSGAGVEGISLNYLGWHLKRLSELEGGLFYADDTAGWDTRITNADLEDEEQILRYLRGEHRTLAKTILEKAYHAKVVKVARPSSSGGCVMDIITRRDQRGSGQVVTYALNTLTNIKVQLIRMMEGEGVIGPSDSQDPRLLRVEAWLKEYGEERLTRMLVSGDDCVVRPIDDRFGKALYFLNDMAKVRKDIGEWEPSEGYSSWEEVPFCSHHFHELTMKDGRVIIVPCRDQDELVGRARVSPGCGWSVRETACLSKAYGQMWLLSYFHRRDLRTLGLAICSAVPIDWVPQGRTTWSIHASGAWMTTEDMLEVWNRVWILDNPFMSDKGKVKEWRDIPYLPKSQDGLCSSLVGRRERAEWAKNIWGSVEKVRRMIGPERYADYLSCMDRHELHWDLKLESNII</sequence>
<accession>Q91B85</accession>
<organismHost>
    <name type="scientific">Homo sapiens</name>
    <name type="common">Human</name>
    <dbReference type="NCBI Taxonomy" id="9606"/>
</organismHost>
<organismHost>
    <name type="scientific">Hyalomma dromedarii</name>
    <name type="common">Camel tick</name>
    <dbReference type="NCBI Taxonomy" id="34626"/>
</organismHost>
<organismHost>
    <name type="scientific">Ornithodoros savignyi</name>
    <name type="common">African eyed tampan</name>
    <name type="synonym">Soft tick</name>
    <dbReference type="NCBI Taxonomy" id="69826"/>
</organismHost>
<evidence type="ECO:0000250" key="1">
    <source>
        <dbReference type="UniProtKB" id="P03314"/>
    </source>
</evidence>
<evidence type="ECO:0000250" key="2">
    <source>
        <dbReference type="UniProtKB" id="P06935"/>
    </source>
</evidence>
<evidence type="ECO:0000250" key="3">
    <source>
        <dbReference type="UniProtKB" id="P14335"/>
    </source>
</evidence>
<evidence type="ECO:0000250" key="4">
    <source>
        <dbReference type="UniProtKB" id="P14336"/>
    </source>
</evidence>
<evidence type="ECO:0000250" key="5">
    <source>
        <dbReference type="UniProtKB" id="P17763"/>
    </source>
</evidence>
<evidence type="ECO:0000250" key="6">
    <source>
        <dbReference type="UniProtKB" id="Q01299"/>
    </source>
</evidence>
<evidence type="ECO:0000250" key="7">
    <source>
        <dbReference type="UniProtKB" id="Q32ZE1"/>
    </source>
</evidence>
<evidence type="ECO:0000250" key="8">
    <source>
        <dbReference type="UniProtKB" id="Q6YMS4"/>
    </source>
</evidence>
<evidence type="ECO:0000250" key="9">
    <source>
        <dbReference type="UniProtKB" id="Q9Q6P4"/>
    </source>
</evidence>
<evidence type="ECO:0000255" key="10"/>
<evidence type="ECO:0000255" key="11">
    <source>
        <dbReference type="PROSITE-ProRule" id="PRU00498"/>
    </source>
</evidence>
<evidence type="ECO:0000255" key="12">
    <source>
        <dbReference type="PROSITE-ProRule" id="PRU00539"/>
    </source>
</evidence>
<evidence type="ECO:0000255" key="13">
    <source>
        <dbReference type="PROSITE-ProRule" id="PRU00541"/>
    </source>
</evidence>
<evidence type="ECO:0000255" key="14">
    <source>
        <dbReference type="PROSITE-ProRule" id="PRU00542"/>
    </source>
</evidence>
<evidence type="ECO:0000255" key="15">
    <source>
        <dbReference type="PROSITE-ProRule" id="PRU00859"/>
    </source>
</evidence>
<evidence type="ECO:0000255" key="16">
    <source>
        <dbReference type="PROSITE-ProRule" id="PRU00860"/>
    </source>
</evidence>
<evidence type="ECO:0000255" key="17">
    <source>
        <dbReference type="PROSITE-ProRule" id="PRU00924"/>
    </source>
</evidence>
<evidence type="ECO:0000256" key="18">
    <source>
        <dbReference type="SAM" id="MobiDB-lite"/>
    </source>
</evidence>
<evidence type="ECO:0000305" key="19"/>
<evidence type="ECO:0000312" key="20">
    <source>
        <dbReference type="EMBL" id="AAL08421.1"/>
    </source>
</evidence>
<name>POLG_ALKV</name>
<protein>
    <recommendedName>
        <fullName>Genome polyprotein</fullName>
    </recommendedName>
    <component>
        <recommendedName>
            <fullName>Capsid protein C</fullName>
        </recommendedName>
        <alternativeName>
            <fullName>Core protein</fullName>
        </alternativeName>
    </component>
    <component>
        <recommendedName>
            <fullName>Protein prM</fullName>
        </recommendedName>
    </component>
    <component>
        <recommendedName>
            <fullName>Peptide pr</fullName>
        </recommendedName>
    </component>
    <component>
        <recommendedName>
            <fullName>Small envelope protein M</fullName>
        </recommendedName>
        <alternativeName>
            <fullName>Matrix protein</fullName>
        </alternativeName>
    </component>
    <component>
        <recommendedName>
            <fullName>Envelope protein E</fullName>
        </recommendedName>
    </component>
    <component>
        <recommendedName>
            <fullName>Non-structural protein 1</fullName>
            <shortName>NS1</shortName>
        </recommendedName>
    </component>
    <component>
        <recommendedName>
            <fullName>Non-structural protein 2A</fullName>
            <shortName>NS2A</shortName>
        </recommendedName>
    </component>
    <component>
        <recommendedName>
            <fullName>Serine protease subunit NS2B</fullName>
        </recommendedName>
        <alternativeName>
            <fullName>Flavivirin protease NS2B regulatory subunit</fullName>
        </alternativeName>
        <alternativeName>
            <fullName>Non-structural protein 2B</fullName>
        </alternativeName>
    </component>
    <component>
        <recommendedName>
            <fullName>Serine protease NS3</fullName>
            <ecNumber>3.4.21.91</ecNumber>
            <ecNumber>3.6.1.15</ecNumber>
            <ecNumber>3.6.4.13</ecNumber>
        </recommendedName>
        <alternativeName>
            <fullName>Flavivirin protease NS3 catalytic subunit</fullName>
        </alternativeName>
        <alternativeName>
            <fullName>Non-structural protein 3</fullName>
        </alternativeName>
    </component>
    <component>
        <recommendedName>
            <fullName>Non-structural protein 4A</fullName>
            <shortName>NS4A</shortName>
        </recommendedName>
    </component>
    <component>
        <recommendedName>
            <fullName>Peptide 2k</fullName>
        </recommendedName>
    </component>
    <component>
        <recommendedName>
            <fullName>Non-structural protein 4B</fullName>
            <shortName>NS4B</shortName>
        </recommendedName>
    </component>
    <component>
        <recommendedName>
            <fullName>RNA-directed RNA polymerase NS5</fullName>
            <ecNumber evidence="17">2.1.1.56</ecNumber>
            <ecNumber evidence="17">2.1.1.57</ecNumber>
            <ecNumber evidence="12">2.7.7.48</ecNumber>
        </recommendedName>
        <alternativeName>
            <fullName>Non-structural protein 5</fullName>
        </alternativeName>
    </component>
</protein>
<proteinExistence type="evidence at protein level"/>
<reference key="1">
    <citation type="journal article" date="2001" name="Biochem. Biophys. Res. Commun.">
        <title>Complete coding sequence of the Alkhurma virus, a tick-borne flavivirus causing severe hemorrhagic fever in humans in Saudi Arabia.</title>
        <authorList>
            <person name="Charrel R.N."/>
            <person name="Zaki A.M."/>
            <person name="Attoui H."/>
            <person name="Fakeeh M."/>
            <person name="Billoir F."/>
            <person name="Yousef A.I."/>
            <person name="de Chesse R."/>
            <person name="De Micco P."/>
            <person name="Gould E.A."/>
            <person name="de Lamballerie X."/>
        </authorList>
    </citation>
    <scope>NUCLEOTIDE SEQUENCE [LARGE SCALE GENOMIC RNA]</scope>
    <source>
        <strain evidence="20">1176</strain>
    </source>
</reference>
<reference key="2">
    <citation type="journal article" date="2005" name="Emerg. Infect. Dis.">
        <title>Low diversity of Alkhurma hemorrhagic fever virus, Saudi Arabia, 1994-1999.</title>
        <authorList>
            <person name="Charrel R.N."/>
            <person name="Zaki A.M."/>
            <person name="Fakeeh M."/>
            <person name="Yousef A.I."/>
            <person name="de Chesse R."/>
            <person name="Attoui H."/>
            <person name="de Lamballerie X."/>
        </authorList>
    </citation>
    <scope>NUCLEOTIDE SEQUENCE [LARGE SCALE GENOMIC RNA]</scope>
    <source>
        <strain evidence="20">1176</strain>
    </source>
</reference>
<reference key="3">
    <citation type="journal article" date="2017" name="Vector Borne Zoonotic Dis.">
        <title>Electron microscopy of Alkhumra hemorrhagic fever virus.</title>
        <authorList>
            <person name="Madani T.A."/>
            <person name="Abuelzein E.M."/>
            <person name="Jalalah S.M."/>
            <person name="Abu-Araki H."/>
            <person name="Azhar E.I."/>
            <person name="Hassan A.M."/>
            <person name="Al-Bar H.M."/>
        </authorList>
    </citation>
    <scope>ELECTRON MICROSCOPY OF THE VIRION</scope>
</reference>
<organism>
    <name type="scientific">Alkhumra hemorrhagic fever virus</name>
    <name type="common">ALKV</name>
    <name type="synonym">Alkhurma hemorrhagic fever virus</name>
    <dbReference type="NCBI Taxonomy" id="172148"/>
    <lineage>
        <taxon>Viruses</taxon>
        <taxon>Riboviria</taxon>
        <taxon>Orthornavirae</taxon>
        <taxon>Kitrinoviricota</taxon>
        <taxon>Flasuviricetes</taxon>
        <taxon>Amarillovirales</taxon>
        <taxon>Flaviviridae</taxon>
        <taxon>Orthoflavivirus</taxon>
        <taxon>Orthoflavivirus kyasanurense</taxon>
    </lineage>
</organism>
<dbReference type="EC" id="3.4.21.91"/>
<dbReference type="EC" id="3.6.1.15"/>
<dbReference type="EC" id="3.6.4.13"/>
<dbReference type="EC" id="2.1.1.56" evidence="17"/>
<dbReference type="EC" id="2.1.1.57" evidence="17"/>
<dbReference type="EC" id="2.7.7.48" evidence="12"/>
<dbReference type="EMBL" id="AF331718">
    <property type="protein sequence ID" value="AAL08421.1"/>
    <property type="molecule type" value="Genomic_DNA"/>
</dbReference>
<dbReference type="RefSeq" id="NP_722551.1">
    <property type="nucleotide sequence ID" value="NC_004355.1"/>
</dbReference>
<dbReference type="SMR" id="Q91B85"/>
<dbReference type="IntAct" id="Q91B85">
    <property type="interactions" value="37"/>
</dbReference>
<dbReference type="MINT" id="Q91B85"/>
<dbReference type="Proteomes" id="UP000136346">
    <property type="component" value="Genome"/>
</dbReference>
<dbReference type="GO" id="GO:0005576">
    <property type="term" value="C:extracellular region"/>
    <property type="evidence" value="ECO:0007669"/>
    <property type="project" value="UniProtKB-SubCell"/>
</dbReference>
<dbReference type="GO" id="GO:0044167">
    <property type="term" value="C:host cell endoplasmic reticulum membrane"/>
    <property type="evidence" value="ECO:0007669"/>
    <property type="project" value="UniProtKB-SubCell"/>
</dbReference>
<dbReference type="GO" id="GO:0042025">
    <property type="term" value="C:host cell nucleus"/>
    <property type="evidence" value="ECO:0007669"/>
    <property type="project" value="UniProtKB-SubCell"/>
</dbReference>
<dbReference type="GO" id="GO:0044220">
    <property type="term" value="C:host cell perinuclear region of cytoplasm"/>
    <property type="evidence" value="ECO:0007669"/>
    <property type="project" value="UniProtKB-SubCell"/>
</dbReference>
<dbReference type="GO" id="GO:0016020">
    <property type="term" value="C:membrane"/>
    <property type="evidence" value="ECO:0007669"/>
    <property type="project" value="UniProtKB-KW"/>
</dbReference>
<dbReference type="GO" id="GO:0019028">
    <property type="term" value="C:viral capsid"/>
    <property type="evidence" value="ECO:0007669"/>
    <property type="project" value="UniProtKB-KW"/>
</dbReference>
<dbReference type="GO" id="GO:0055036">
    <property type="term" value="C:virion membrane"/>
    <property type="evidence" value="ECO:0007669"/>
    <property type="project" value="UniProtKB-SubCell"/>
</dbReference>
<dbReference type="GO" id="GO:0005524">
    <property type="term" value="F:ATP binding"/>
    <property type="evidence" value="ECO:0007669"/>
    <property type="project" value="UniProtKB-KW"/>
</dbReference>
<dbReference type="GO" id="GO:0016887">
    <property type="term" value="F:ATP hydrolysis activity"/>
    <property type="evidence" value="ECO:0007669"/>
    <property type="project" value="RHEA"/>
</dbReference>
<dbReference type="GO" id="GO:0003725">
    <property type="term" value="F:double-stranded RNA binding"/>
    <property type="evidence" value="ECO:0007669"/>
    <property type="project" value="InterPro"/>
</dbReference>
<dbReference type="GO" id="GO:0046872">
    <property type="term" value="F:metal ion binding"/>
    <property type="evidence" value="ECO:0007669"/>
    <property type="project" value="UniProtKB-KW"/>
</dbReference>
<dbReference type="GO" id="GO:0004483">
    <property type="term" value="F:mRNA (nucleoside-2'-O-)-methyltransferase activity"/>
    <property type="evidence" value="ECO:0007669"/>
    <property type="project" value="UniProtKB-EC"/>
</dbReference>
<dbReference type="GO" id="GO:0004482">
    <property type="term" value="F:mRNA 5'-cap (guanine-N7-)-methyltransferase activity"/>
    <property type="evidence" value="ECO:0007669"/>
    <property type="project" value="UniProtKB-EC"/>
</dbReference>
<dbReference type="GO" id="GO:0046983">
    <property type="term" value="F:protein dimerization activity"/>
    <property type="evidence" value="ECO:0007669"/>
    <property type="project" value="InterPro"/>
</dbReference>
<dbReference type="GO" id="GO:0003724">
    <property type="term" value="F:RNA helicase activity"/>
    <property type="evidence" value="ECO:0007669"/>
    <property type="project" value="UniProtKB-EC"/>
</dbReference>
<dbReference type="GO" id="GO:0003968">
    <property type="term" value="F:RNA-directed RNA polymerase activity"/>
    <property type="evidence" value="ECO:0007669"/>
    <property type="project" value="UniProtKB-KW"/>
</dbReference>
<dbReference type="GO" id="GO:0004252">
    <property type="term" value="F:serine-type endopeptidase activity"/>
    <property type="evidence" value="ECO:0007669"/>
    <property type="project" value="InterPro"/>
</dbReference>
<dbReference type="GO" id="GO:0005198">
    <property type="term" value="F:structural molecule activity"/>
    <property type="evidence" value="ECO:0007669"/>
    <property type="project" value="InterPro"/>
</dbReference>
<dbReference type="GO" id="GO:0039654">
    <property type="term" value="P:fusion of virus membrane with host endosome membrane"/>
    <property type="evidence" value="ECO:0007669"/>
    <property type="project" value="UniProtKB-KW"/>
</dbReference>
<dbReference type="GO" id="GO:0006508">
    <property type="term" value="P:proteolysis"/>
    <property type="evidence" value="ECO:0007669"/>
    <property type="project" value="UniProtKB-KW"/>
</dbReference>
<dbReference type="GO" id="GO:0046718">
    <property type="term" value="P:symbiont entry into host cell"/>
    <property type="evidence" value="ECO:0007669"/>
    <property type="project" value="UniProtKB-KW"/>
</dbReference>
<dbReference type="GO" id="GO:0039520">
    <property type="term" value="P:symbiont-mediated activation of host autophagy"/>
    <property type="evidence" value="ECO:0007669"/>
    <property type="project" value="UniProtKB-KW"/>
</dbReference>
<dbReference type="GO" id="GO:0052170">
    <property type="term" value="P:symbiont-mediated suppression of host innate immune response"/>
    <property type="evidence" value="ECO:0007669"/>
    <property type="project" value="UniProtKB-KW"/>
</dbReference>
<dbReference type="GO" id="GO:0039563">
    <property type="term" value="P:symbiont-mediated suppression of host JAK-STAT cascade via inhibition of STAT1 activity"/>
    <property type="evidence" value="ECO:0007669"/>
    <property type="project" value="UniProtKB-KW"/>
</dbReference>
<dbReference type="GO" id="GO:0039564">
    <property type="term" value="P:symbiont-mediated suppression of host JAK-STAT cascade via inhibition of STAT2 activity"/>
    <property type="evidence" value="ECO:0007669"/>
    <property type="project" value="UniProtKB-KW"/>
</dbReference>
<dbReference type="GO" id="GO:0039502">
    <property type="term" value="P:symbiont-mediated suppression of host type I interferon-mediated signaling pathway"/>
    <property type="evidence" value="ECO:0007669"/>
    <property type="project" value="UniProtKB-KW"/>
</dbReference>
<dbReference type="GO" id="GO:0039694">
    <property type="term" value="P:viral RNA genome replication"/>
    <property type="evidence" value="ECO:0007669"/>
    <property type="project" value="InterPro"/>
</dbReference>
<dbReference type="GO" id="GO:0019062">
    <property type="term" value="P:virion attachment to host cell"/>
    <property type="evidence" value="ECO:0007669"/>
    <property type="project" value="UniProtKB-KW"/>
</dbReference>
<dbReference type="CDD" id="cd20761">
    <property type="entry name" value="capping_2-OMTase_Flaviviridae"/>
    <property type="match status" value="1"/>
</dbReference>
<dbReference type="CDD" id="cd17038">
    <property type="entry name" value="Flavi_M"/>
    <property type="match status" value="1"/>
</dbReference>
<dbReference type="CDD" id="cd23204">
    <property type="entry name" value="Flavivirus_RdRp"/>
    <property type="match status" value="1"/>
</dbReference>
<dbReference type="FunFam" id="3.30.70.2840:FF:000004">
    <property type="entry name" value="Genome polyprotein"/>
    <property type="match status" value="1"/>
</dbReference>
<dbReference type="Gene3D" id="1.10.260.90">
    <property type="match status" value="1"/>
</dbReference>
<dbReference type="Gene3D" id="1.20.1280.260">
    <property type="match status" value="1"/>
</dbReference>
<dbReference type="Gene3D" id="2.40.10.120">
    <property type="match status" value="1"/>
</dbReference>
<dbReference type="Gene3D" id="2.60.40.350">
    <property type="match status" value="1"/>
</dbReference>
<dbReference type="Gene3D" id="1.10.8.970">
    <property type="entry name" value="Flavivirus envelope glycoprotein M-like"/>
    <property type="match status" value="1"/>
</dbReference>
<dbReference type="Gene3D" id="2.60.260.50">
    <property type="entry name" value="Flavivirus polyprotein propeptide domain"/>
    <property type="match status" value="1"/>
</dbReference>
<dbReference type="Gene3D" id="3.30.70.2840">
    <property type="entry name" value="Flavivirus RNA-directed RNA polymerase, thumb domain"/>
    <property type="match status" value="3"/>
</dbReference>
<dbReference type="Gene3D" id="3.40.50.300">
    <property type="entry name" value="P-loop containing nucleotide triphosphate hydrolases"/>
    <property type="match status" value="2"/>
</dbReference>
<dbReference type="Gene3D" id="2.60.98.10">
    <property type="entry name" value="Tick-borne Encephalitis virus Glycoprotein, domain 1"/>
    <property type="match status" value="1"/>
</dbReference>
<dbReference type="Gene3D" id="3.40.50.150">
    <property type="entry name" value="Vaccinia Virus protein VP39"/>
    <property type="match status" value="1"/>
</dbReference>
<dbReference type="Gene3D" id="3.30.67.10">
    <property type="entry name" value="Viral Envelope Glycoprotein, domain 2"/>
    <property type="match status" value="1"/>
</dbReference>
<dbReference type="Gene3D" id="3.30.387.10">
    <property type="entry name" value="Viral Envelope Glycoprotein, domain 3"/>
    <property type="match status" value="1"/>
</dbReference>
<dbReference type="InterPro" id="IPR043502">
    <property type="entry name" value="DNA/RNA_pol_sf"/>
</dbReference>
<dbReference type="InterPro" id="IPR000069">
    <property type="entry name" value="Env_glycoprot_M_flavivir"/>
</dbReference>
<dbReference type="InterPro" id="IPR038302">
    <property type="entry name" value="Env_glycoprot_M_sf_flavivir"/>
</dbReference>
<dbReference type="InterPro" id="IPR013755">
    <property type="entry name" value="Flav_gly_cen_dom_subdom1"/>
</dbReference>
<dbReference type="InterPro" id="IPR001122">
    <property type="entry name" value="Flavi_capsidC"/>
</dbReference>
<dbReference type="InterPro" id="IPR011492">
    <property type="entry name" value="Flavi_DEAD"/>
</dbReference>
<dbReference type="InterPro" id="IPR027287">
    <property type="entry name" value="Flavi_E_Ig-like"/>
</dbReference>
<dbReference type="InterPro" id="IPR026470">
    <property type="entry name" value="Flavi_E_Stem/Anchor_dom"/>
</dbReference>
<dbReference type="InterPro" id="IPR038345">
    <property type="entry name" value="Flavi_E_Stem/Anchor_dom_sf"/>
</dbReference>
<dbReference type="InterPro" id="IPR011998">
    <property type="entry name" value="Flavi_Glycoprot_E_cen/dimer"/>
</dbReference>
<dbReference type="InterPro" id="IPR001157">
    <property type="entry name" value="Flavi_NS1"/>
</dbReference>
<dbReference type="InterPro" id="IPR000752">
    <property type="entry name" value="Flavi_NS2A"/>
</dbReference>
<dbReference type="InterPro" id="IPR000487">
    <property type="entry name" value="Flavi_NS2B"/>
</dbReference>
<dbReference type="InterPro" id="IPR001850">
    <property type="entry name" value="Flavi_NS3_S7"/>
</dbReference>
<dbReference type="InterPro" id="IPR000404">
    <property type="entry name" value="Flavi_NS4A"/>
</dbReference>
<dbReference type="InterPro" id="IPR001528">
    <property type="entry name" value="Flavi_NS4B"/>
</dbReference>
<dbReference type="InterPro" id="IPR046811">
    <property type="entry name" value="Flavi_NS5_thumb"/>
</dbReference>
<dbReference type="InterPro" id="IPR002535">
    <property type="entry name" value="Flavi_propep"/>
</dbReference>
<dbReference type="InterPro" id="IPR038688">
    <property type="entry name" value="Flavi_propep_sf"/>
</dbReference>
<dbReference type="InterPro" id="IPR047530">
    <property type="entry name" value="Flavi_RdRp"/>
</dbReference>
<dbReference type="InterPro" id="IPR000208">
    <property type="entry name" value="Flavi_RdRp_fingers/palm"/>
</dbReference>
<dbReference type="InterPro" id="IPR000336">
    <property type="entry name" value="Flavivir/Alphavir_Ig-like_sf"/>
</dbReference>
<dbReference type="InterPro" id="IPR014412">
    <property type="entry name" value="Gen_Poly_FLV"/>
</dbReference>
<dbReference type="InterPro" id="IPR036253">
    <property type="entry name" value="Glycoprot_cen/dimer_sf"/>
</dbReference>
<dbReference type="InterPro" id="IPR038055">
    <property type="entry name" value="Glycoprot_E_dimer_dom"/>
</dbReference>
<dbReference type="InterPro" id="IPR013756">
    <property type="entry name" value="GlyE_cen_dom_subdom2"/>
</dbReference>
<dbReference type="InterPro" id="IPR014001">
    <property type="entry name" value="Helicase_ATP-bd"/>
</dbReference>
<dbReference type="InterPro" id="IPR001650">
    <property type="entry name" value="Helicase_C-like"/>
</dbReference>
<dbReference type="InterPro" id="IPR014756">
    <property type="entry name" value="Ig_E-set"/>
</dbReference>
<dbReference type="InterPro" id="IPR026490">
    <property type="entry name" value="mRNA_cap_0/1_MeTrfase"/>
</dbReference>
<dbReference type="InterPro" id="IPR049486">
    <property type="entry name" value="NS3-hel_C_flaviviridae"/>
</dbReference>
<dbReference type="InterPro" id="IPR027417">
    <property type="entry name" value="P-loop_NTPase"/>
</dbReference>
<dbReference type="InterPro" id="IPR009003">
    <property type="entry name" value="Peptidase_S1_PA"/>
</dbReference>
<dbReference type="InterPro" id="IPR007094">
    <property type="entry name" value="RNA-dir_pol_PSvirus"/>
</dbReference>
<dbReference type="InterPro" id="IPR002877">
    <property type="entry name" value="RNA_MeTrfase_FtsJ_dom"/>
</dbReference>
<dbReference type="InterPro" id="IPR029063">
    <property type="entry name" value="SAM-dependent_MTases_sf"/>
</dbReference>
<dbReference type="NCBIfam" id="TIGR04240">
    <property type="entry name" value="flavi_E_stem"/>
    <property type="match status" value="1"/>
</dbReference>
<dbReference type="Pfam" id="PF20907">
    <property type="entry name" value="Flav_NS3-hel_C"/>
    <property type="match status" value="1"/>
</dbReference>
<dbReference type="Pfam" id="PF01003">
    <property type="entry name" value="Flavi_capsid"/>
    <property type="match status" value="1"/>
</dbReference>
<dbReference type="Pfam" id="PF07652">
    <property type="entry name" value="Flavi_DEAD"/>
    <property type="match status" value="1"/>
</dbReference>
<dbReference type="Pfam" id="PF21659">
    <property type="entry name" value="Flavi_E_stem"/>
    <property type="match status" value="1"/>
</dbReference>
<dbReference type="Pfam" id="PF02832">
    <property type="entry name" value="Flavi_glycop_C"/>
    <property type="match status" value="1"/>
</dbReference>
<dbReference type="Pfam" id="PF00869">
    <property type="entry name" value="Flavi_glycoprot"/>
    <property type="match status" value="1"/>
</dbReference>
<dbReference type="Pfam" id="PF01004">
    <property type="entry name" value="Flavi_M"/>
    <property type="match status" value="1"/>
</dbReference>
<dbReference type="Pfam" id="PF00948">
    <property type="entry name" value="Flavi_NS1"/>
    <property type="match status" value="1"/>
</dbReference>
<dbReference type="Pfam" id="PF01005">
    <property type="entry name" value="Flavi_NS2A"/>
    <property type="match status" value="1"/>
</dbReference>
<dbReference type="Pfam" id="PF01002">
    <property type="entry name" value="Flavi_NS2B"/>
    <property type="match status" value="1"/>
</dbReference>
<dbReference type="Pfam" id="PF01350">
    <property type="entry name" value="Flavi_NS4A"/>
    <property type="match status" value="1"/>
</dbReference>
<dbReference type="Pfam" id="PF01349">
    <property type="entry name" value="Flavi_NS4B"/>
    <property type="match status" value="1"/>
</dbReference>
<dbReference type="Pfam" id="PF00972">
    <property type="entry name" value="Flavi_NS5"/>
    <property type="match status" value="1"/>
</dbReference>
<dbReference type="Pfam" id="PF20483">
    <property type="entry name" value="Flavi_NS5_thumb"/>
    <property type="match status" value="1"/>
</dbReference>
<dbReference type="Pfam" id="PF01570">
    <property type="entry name" value="Flavi_propep"/>
    <property type="match status" value="1"/>
</dbReference>
<dbReference type="Pfam" id="PF01728">
    <property type="entry name" value="FtsJ"/>
    <property type="match status" value="1"/>
</dbReference>
<dbReference type="Pfam" id="PF00949">
    <property type="entry name" value="Peptidase_S7"/>
    <property type="match status" value="1"/>
</dbReference>
<dbReference type="PIRSF" id="PIRSF003817">
    <property type="entry name" value="Gen_Poly_FLV"/>
    <property type="match status" value="1"/>
</dbReference>
<dbReference type="SMART" id="SM00487">
    <property type="entry name" value="DEXDc"/>
    <property type="match status" value="1"/>
</dbReference>
<dbReference type="SMART" id="SM00490">
    <property type="entry name" value="HELICc"/>
    <property type="match status" value="1"/>
</dbReference>
<dbReference type="SUPFAM" id="SSF56672">
    <property type="entry name" value="DNA/RNA polymerases"/>
    <property type="match status" value="1"/>
</dbReference>
<dbReference type="SUPFAM" id="SSF81296">
    <property type="entry name" value="E set domains"/>
    <property type="match status" value="1"/>
</dbReference>
<dbReference type="SUPFAM" id="SSF52540">
    <property type="entry name" value="P-loop containing nucleoside triphosphate hydrolases"/>
    <property type="match status" value="2"/>
</dbReference>
<dbReference type="SUPFAM" id="SSF53335">
    <property type="entry name" value="S-adenosyl-L-methionine-dependent methyltransferases"/>
    <property type="match status" value="1"/>
</dbReference>
<dbReference type="SUPFAM" id="SSF50494">
    <property type="entry name" value="Trypsin-like serine proteases"/>
    <property type="match status" value="1"/>
</dbReference>
<dbReference type="SUPFAM" id="SSF56983">
    <property type="entry name" value="Viral glycoprotein, central and dimerisation domains"/>
    <property type="match status" value="1"/>
</dbReference>
<dbReference type="PROSITE" id="PS51527">
    <property type="entry name" value="FLAVIVIRUS_NS2B"/>
    <property type="match status" value="1"/>
</dbReference>
<dbReference type="PROSITE" id="PS51528">
    <property type="entry name" value="FLAVIVIRUS_NS3PRO"/>
    <property type="match status" value="1"/>
</dbReference>
<dbReference type="PROSITE" id="PS51192">
    <property type="entry name" value="HELICASE_ATP_BIND_1"/>
    <property type="match status" value="1"/>
</dbReference>
<dbReference type="PROSITE" id="PS51194">
    <property type="entry name" value="HELICASE_CTER"/>
    <property type="match status" value="1"/>
</dbReference>
<dbReference type="PROSITE" id="PS50507">
    <property type="entry name" value="RDRP_SSRNA_POS"/>
    <property type="match status" value="1"/>
</dbReference>
<dbReference type="PROSITE" id="PS51591">
    <property type="entry name" value="RNA_CAP01_NS5_MT"/>
    <property type="match status" value="1"/>
</dbReference>
<keyword id="KW-0007">Acetylation</keyword>
<keyword id="KW-1072">Activation of host autophagy by virus</keyword>
<keyword id="KW-0067">ATP-binding</keyword>
<keyword id="KW-0167">Capsid protein</keyword>
<keyword id="KW-0165">Cleavage on pair of basic residues</keyword>
<keyword id="KW-1015">Disulfide bond</keyword>
<keyword id="KW-1170">Fusion of virus membrane with host endosomal membrane</keyword>
<keyword id="KW-1168">Fusion of virus membrane with host membrane</keyword>
<keyword id="KW-0325">Glycoprotein</keyword>
<keyword id="KW-0347">Helicase</keyword>
<keyword id="KW-1035">Host cytoplasm</keyword>
<keyword id="KW-1038">Host endoplasmic reticulum</keyword>
<keyword id="KW-1043">Host membrane</keyword>
<keyword id="KW-1048">Host nucleus</keyword>
<keyword id="KW-0945">Host-virus interaction</keyword>
<keyword id="KW-0378">Hydrolase</keyword>
<keyword id="KW-1090">Inhibition of host innate immune response by virus</keyword>
<keyword id="KW-1114">Inhibition of host interferon signaling pathway by virus</keyword>
<keyword id="KW-1105">Inhibition of host STAT1 by virus</keyword>
<keyword id="KW-1106">Inhibition of host STAT2 by virus</keyword>
<keyword id="KW-0922">Interferon antiviral system evasion</keyword>
<keyword id="KW-0472">Membrane</keyword>
<keyword id="KW-0479">Metal-binding</keyword>
<keyword id="KW-0489">Methyltransferase</keyword>
<keyword id="KW-0506">mRNA capping</keyword>
<keyword id="KW-0507">mRNA processing</keyword>
<keyword id="KW-0547">Nucleotide-binding</keyword>
<keyword id="KW-0548">Nucleotidyltransferase</keyword>
<keyword id="KW-0597">Phosphoprotein</keyword>
<keyword id="KW-0645">Protease</keyword>
<keyword id="KW-0694">RNA-binding</keyword>
<keyword id="KW-0696">RNA-directed RNA polymerase</keyword>
<keyword id="KW-0949">S-adenosyl-L-methionine</keyword>
<keyword id="KW-0964">Secreted</keyword>
<keyword id="KW-0720">Serine protease</keyword>
<keyword id="KW-0941">Suppressor of RNA silencing</keyword>
<keyword id="KW-0808">Transferase</keyword>
<keyword id="KW-0812">Transmembrane</keyword>
<keyword id="KW-1133">Transmembrane helix</keyword>
<keyword id="KW-1161">Viral attachment to host cell</keyword>
<keyword id="KW-0899">Viral immunoevasion</keyword>
<keyword id="KW-1162">Viral penetration into host cytoplasm</keyword>
<keyword id="KW-0693">Viral RNA replication</keyword>
<keyword id="KW-0946">Virion</keyword>
<keyword id="KW-1160">Virus entry into host cell</keyword>
<keyword id="KW-0862">Zinc</keyword>
<comment type="function">
    <molecule>Capsid protein C</molecule>
    <text evidence="5">Plays a role in virus budding by binding to the cell membrane and gathering the viral RNA into a nucleocapsid that forms the core of a mature virus particle. During virus entry, may induce genome penetration into the host cytoplasm after hemifusion induced by the surface proteins. Can migrate to the cell nucleus where it modulates host functions.</text>
</comment>
<comment type="function">
    <molecule>Capsid protein C</molecule>
    <text evidence="1">Inhibits RNA silencing by interfering with host Dicer.</text>
</comment>
<comment type="function">
    <molecule>Peptide pr</molecule>
    <text evidence="5">Prevents premature fusion activity of envelope proteins in trans-Golgi by binding to envelope protein E at pH6.0. After virion release in extracellular space, gets dissociated from E dimers.</text>
</comment>
<comment type="function">
    <molecule>Protein prM</molecule>
    <text evidence="5">Acts as a chaperone for envelope protein E during intracellular virion assembly by masking and inactivating envelope protein E fusion peptide. prM is the only viral peptide matured by host furin in the trans-Golgi network probably to avoid catastrophic activation of the viral fusion activity in acidic Golgi compartment prior to virion release. prM-E cleavage is inefficient, and many virions are only partially matured. These uncleaved prM would play a role in immune evasion.</text>
</comment>
<comment type="function">
    <molecule>Small envelope protein M</molecule>
    <text evidence="5">May play a role in virus budding. Exerts cytotoxic effects by activating a mitochondrial apoptotic pathway through M ectodomain. May display a viroporin activity.</text>
</comment>
<comment type="function">
    <molecule>Envelope protein E</molecule>
    <text evidence="5">Binds to host cell surface receptor and mediates fusion between viral and cellular membranes. Envelope protein is synthesized in the endoplasmic reticulum in the form of heterodimer with protein prM. They play a role in virion budding in the ER, and the newly formed immature particle is covered with 60 spikes composed of heterodimer between precursor prM and envelope protein E. The virion is transported to the Golgi apparatus where the low pH causes dissociation of PrM-E heterodimers and formation of E homodimers. prM-E cleavage is inefficient, and many virions are only partially matured. These uncleaved prM would play a role in immune evasion.</text>
</comment>
<comment type="function">
    <molecule>Non-structural protein 1</molecule>
    <text evidence="9">Involved in immune evasion, pathogenesis and viral replication. Once cleaved off the polyprotein, is targeted to three destinations: the viral replication cycle, the plasma membrane and the extracellular compartment. Essential for viral replication. Required for formation of the replication complex and recruitment of other non-structural proteins to the ER-derived membrane structures. Excreted as a hexameric lipoparticle that plays a role against host immune response. Antagonizing the complement function. Binds to the host macrophages and dendritic cells. Inhibits signal transduction originating from Toll-like receptor 3 (TLR3).</text>
</comment>
<comment type="function">
    <molecule>Non-structural protein 2A</molecule>
    <text evidence="5">Component of the viral RNA replication complex that functions in virion assembly and antagonizes the host immune response.</text>
</comment>
<comment type="function">
    <molecule>Serine protease subunit NS2B</molecule>
    <text evidence="5 15">Required cofactor for the serine protease function of NS3. May have membrane-destabilizing activity and form viroporins (By similarity).</text>
</comment>
<comment type="function">
    <molecule>Serine protease NS3</molecule>
    <text evidence="16">Displays three enzymatic activities: serine protease, NTPase and RNA helicase. NS3 serine protease, in association with NS2B, performs its autocleavage and cleaves the polyprotein at dibasic sites in the cytoplasm: C-prM, NS2A-NS2B, NS2B-NS3, NS3-NS4A, NS4A-2K and NS4B-NS5. NS3 RNA helicase binds RNA and unwinds dsRNA in the 3' to 5' direction.</text>
</comment>
<comment type="function">
    <molecule>Non-structural protein 4A</molecule>
    <text evidence="9">Regulates the ATPase activity of the NS3 helicase activity. NS4A allows NS3 helicase to conserve energy during unwinding.</text>
</comment>
<comment type="function">
    <molecule>Peptide 2k</molecule>
    <text evidence="5">Functions as a signal peptide for NS4B and is required for the interferon antagonism activity of the latter.</text>
</comment>
<comment type="function">
    <molecule>Non-structural protein 4B</molecule>
    <text evidence="9">Induces the formation of ER-derived membrane vesicles where the viral replication takes place. Inhibits interferon (IFN)-induced host STAT1 phosphorylation and nuclear translocation, thereby preventing the establishment of cellular antiviral state by blocking the IFN-alpha/beta pathway. Inhibits STAT2 translocation in the nucleus after IFN-alpha treatment.</text>
</comment>
<comment type="function">
    <molecule>RNA-directed RNA polymerase NS5</molecule>
    <text evidence="5">Replicates the viral (+) and (-) RNA genome, and performs the capping of genomes in the cytoplasm. NS5 methylates viral RNA cap at guanine N-7 and ribose 2'-O positions. Besides its role in RNA genome replication, also prevents the establishment of cellular antiviral state by blocking the interferon-alpha/beta (IFN-alpha/beta) signaling pathway. Inhibits host TYK2 and STAT2 phosphorylation, thereby preventing activation of JAK-STAT signaling pathway.</text>
</comment>
<comment type="catalytic activity">
    <molecule>Serine protease NS3</molecule>
    <reaction>
        <text>Selective hydrolysis of -Xaa-Xaa-|-Yaa- bonds in which each of the Xaa can be either Arg or Lys and Yaa can be either Ser or Ala.</text>
        <dbReference type="EC" id="3.4.21.91"/>
    </reaction>
</comment>
<comment type="catalytic activity">
    <molecule>RNA-directed RNA polymerase NS5</molecule>
    <reaction evidence="12">
        <text>RNA(n) + a ribonucleoside 5'-triphosphate = RNA(n+1) + diphosphate</text>
        <dbReference type="Rhea" id="RHEA:21248"/>
        <dbReference type="Rhea" id="RHEA-COMP:14527"/>
        <dbReference type="Rhea" id="RHEA-COMP:17342"/>
        <dbReference type="ChEBI" id="CHEBI:33019"/>
        <dbReference type="ChEBI" id="CHEBI:61557"/>
        <dbReference type="ChEBI" id="CHEBI:140395"/>
        <dbReference type="EC" id="2.7.7.48"/>
    </reaction>
</comment>
<comment type="catalytic activity">
    <molecule>Serine protease NS3</molecule>
    <reaction>
        <text>a ribonucleoside 5'-triphosphate + H2O = a ribonucleoside 5'-diphosphate + phosphate + H(+)</text>
        <dbReference type="Rhea" id="RHEA:23680"/>
        <dbReference type="ChEBI" id="CHEBI:15377"/>
        <dbReference type="ChEBI" id="CHEBI:15378"/>
        <dbReference type="ChEBI" id="CHEBI:43474"/>
        <dbReference type="ChEBI" id="CHEBI:57930"/>
        <dbReference type="ChEBI" id="CHEBI:61557"/>
        <dbReference type="EC" id="3.6.1.15"/>
    </reaction>
</comment>
<comment type="catalytic activity">
    <molecule>Serine protease NS3</molecule>
    <reaction>
        <text>ATP + H2O = ADP + phosphate + H(+)</text>
        <dbReference type="Rhea" id="RHEA:13065"/>
        <dbReference type="ChEBI" id="CHEBI:15377"/>
        <dbReference type="ChEBI" id="CHEBI:15378"/>
        <dbReference type="ChEBI" id="CHEBI:30616"/>
        <dbReference type="ChEBI" id="CHEBI:43474"/>
        <dbReference type="ChEBI" id="CHEBI:456216"/>
        <dbReference type="EC" id="3.6.4.13"/>
    </reaction>
</comment>
<comment type="catalytic activity">
    <molecule>RNA-directed RNA polymerase NS5</molecule>
    <reaction evidence="17">
        <text>a 5'-end (5'-triphosphoguanosine)-ribonucleoside in mRNA + S-adenosyl-L-methionine = a 5'-end (N(7)-methyl 5'-triphosphoguanosine)-ribonucleoside in mRNA + S-adenosyl-L-homocysteine</text>
        <dbReference type="Rhea" id="RHEA:67008"/>
        <dbReference type="Rhea" id="RHEA-COMP:17166"/>
        <dbReference type="Rhea" id="RHEA-COMP:17167"/>
        <dbReference type="ChEBI" id="CHEBI:57856"/>
        <dbReference type="ChEBI" id="CHEBI:59789"/>
        <dbReference type="ChEBI" id="CHEBI:156461"/>
        <dbReference type="ChEBI" id="CHEBI:167617"/>
        <dbReference type="EC" id="2.1.1.56"/>
    </reaction>
</comment>
<comment type="catalytic activity">
    <molecule>RNA-directed RNA polymerase NS5</molecule>
    <reaction evidence="17">
        <text>a 5'-end (N(7)-methyl 5'-triphosphoguanosine)-ribonucleoside in mRNA + S-adenosyl-L-methionine = a 5'-end (N(7)-methyl 5'-triphosphoguanosine)-(2'-O-methyl-ribonucleoside) in mRNA + S-adenosyl-L-homocysteine + H(+)</text>
        <dbReference type="Rhea" id="RHEA:67020"/>
        <dbReference type="Rhea" id="RHEA-COMP:17167"/>
        <dbReference type="Rhea" id="RHEA-COMP:17168"/>
        <dbReference type="ChEBI" id="CHEBI:15378"/>
        <dbReference type="ChEBI" id="CHEBI:57856"/>
        <dbReference type="ChEBI" id="CHEBI:59789"/>
        <dbReference type="ChEBI" id="CHEBI:156461"/>
        <dbReference type="ChEBI" id="CHEBI:167609"/>
        <dbReference type="EC" id="2.1.1.57"/>
    </reaction>
</comment>
<comment type="subunit">
    <molecule>Capsid protein C</molecule>
    <text evidence="5">Homodimer. Interacts (via N-terminus) with host EXOC1 (via C-terminus); this interaction results in EXOC1 degradation through the proteasome degradation pathway.</text>
</comment>
<comment type="subunit">
    <molecule>Protein prM</molecule>
    <text evidence="5">Forms heterodimers with envelope protein E in the endoplasmic reticulum and Golgi.</text>
</comment>
<comment type="subunit">
    <molecule>Envelope protein E</molecule>
    <text evidence="5">Homodimer; in the endoplasmic reticulum and Golgi. Interacts with protein prM. Interacts with non-structural protein 1.</text>
</comment>
<comment type="subunit">
    <molecule>Non-structural protein 1</molecule>
    <text evidence="5">Homodimer; Homohexamer when secreted. Interacts with envelope protein E.</text>
</comment>
<comment type="subunit">
    <molecule>Non-structural protein 2A</molecule>
    <text evidence="5">Interacts (via N-terminus) with serine protease NS3.</text>
</comment>
<comment type="subunit">
    <molecule>Serine protease subunit NS2B</molecule>
    <text evidence="5">Forms a heterodimer with serine protease NS3. May form homooligomers.</text>
</comment>
<comment type="subunit">
    <molecule>Serine protease NS3</molecule>
    <text evidence="5">Forms a heterodimer with NS2B. Interacts with NS4B. Interacts with unphosphorylated RNA-directed RNA polymerase NS5; this interaction stimulates RNA-directed RNA polymerase NS5 guanylyltransferase activity.</text>
</comment>
<comment type="subunit">
    <molecule>Non-structural protein 4B</molecule>
    <text evidence="5">Interacts with serine protease NS3.</text>
</comment>
<comment type="subunit">
    <molecule>RNA-directed RNA polymerase NS5</molecule>
    <text evidence="5">Homodimer. Interacts with host STAT2; this interaction inhibits the phosphorylation of the latter, and, when all viral proteins are present (polyprotein), targets STAT2 for degradation. Interacts with serine protease NS3.</text>
</comment>
<comment type="subcellular location">
    <molecule>Capsid protein C</molecule>
    <subcellularLocation>
        <location evidence="5">Virion</location>
    </subcellularLocation>
    <subcellularLocation>
        <location evidence="5">Host nucleus</location>
    </subcellularLocation>
    <subcellularLocation>
        <location evidence="5">Host cytoplasm</location>
        <location evidence="5">Host perinuclear region</location>
    </subcellularLocation>
    <subcellularLocation>
        <location evidence="5">Host cytoplasm</location>
    </subcellularLocation>
</comment>
<comment type="subcellular location">
    <molecule>Peptide pr</molecule>
    <subcellularLocation>
        <location evidence="5">Secreted</location>
    </subcellularLocation>
</comment>
<comment type="subcellular location">
    <molecule>Small envelope protein M</molecule>
    <subcellularLocation>
        <location evidence="1">Virion membrane</location>
        <topology evidence="1">Multi-pass membrane protein</topology>
    </subcellularLocation>
    <subcellularLocation>
        <location evidence="1">Host endoplasmic reticulum membrane</location>
        <topology evidence="10">Multi-pass membrane protein</topology>
    </subcellularLocation>
    <text evidence="1">ER membrane retention is mediated by the transmembrane domains.</text>
</comment>
<comment type="subcellular location">
    <molecule>Envelope protein E</molecule>
    <subcellularLocation>
        <location evidence="19">Virion membrane</location>
        <topology evidence="1">Multi-pass membrane protein</topology>
    </subcellularLocation>
    <subcellularLocation>
        <location evidence="1">Host endoplasmic reticulum membrane</location>
        <topology evidence="10">Multi-pass membrane protein</topology>
    </subcellularLocation>
    <text evidence="1">ER membrane retention is mediated by the transmembrane domains.</text>
</comment>
<comment type="subcellular location">
    <molecule>Non-structural protein 1</molecule>
    <subcellularLocation>
        <location evidence="5">Secreted</location>
    </subcellularLocation>
    <subcellularLocation>
        <location>Host endoplasmic reticulum membrane</location>
        <topology>Peripheral membrane protein</topology>
        <orientation evidence="5">Lumenal side</orientation>
    </subcellularLocation>
    <text evidence="9">Located in RE-derived vesicles hosting the replication complex.</text>
</comment>
<comment type="subcellular location">
    <molecule>Non-structural protein 2A</molecule>
    <subcellularLocation>
        <location evidence="3">Host endoplasmic reticulum membrane</location>
        <topology evidence="5">Multi-pass membrane protein</topology>
    </subcellularLocation>
</comment>
<comment type="subcellular location">
    <molecule>Serine protease subunit NS2B</molecule>
    <subcellularLocation>
        <location>Host endoplasmic reticulum membrane</location>
        <topology evidence="5">Multi-pass membrane protein</topology>
    </subcellularLocation>
</comment>
<comment type="subcellular location">
    <molecule>Serine protease NS3</molecule>
    <subcellularLocation>
        <location evidence="16">Host endoplasmic reticulum membrane</location>
        <topology evidence="16">Peripheral membrane protein</topology>
        <orientation evidence="16">Cytoplasmic side</orientation>
    </subcellularLocation>
    <text evidence="16">Remains non-covalently associated to serine protease subunit NS2B.</text>
</comment>
<comment type="subcellular location">
    <molecule>Non-structural protein 4A</molecule>
    <subcellularLocation>
        <location evidence="3">Host endoplasmic reticulum membrane</location>
        <topology evidence="5">Multi-pass membrane protein</topology>
    </subcellularLocation>
    <text evidence="5">Located in RE-associated vesicles hosting the replication complex.</text>
</comment>
<comment type="subcellular location">
    <molecule>Non-structural protein 4B</molecule>
    <subcellularLocation>
        <location evidence="5">Host endoplasmic reticulum membrane</location>
        <topology evidence="5">Multi-pass membrane protein</topology>
    </subcellularLocation>
    <text evidence="9">Located in RE-derived vesicles hosting the replication complex.</text>
</comment>
<comment type="subcellular location">
    <molecule>RNA-directed RNA polymerase NS5</molecule>
    <subcellularLocation>
        <location>Host endoplasmic reticulum membrane</location>
        <topology>Peripheral membrane protein</topology>
        <orientation>Cytoplasmic side</orientation>
    </subcellularLocation>
    <subcellularLocation>
        <location evidence="2">Host nucleus</location>
    </subcellularLocation>
    <text evidence="5">Located in RE-associated vesicles hosting the replication complex. NS5 protein is mainly localized in the nucleus rather than in ER vesicles.</text>
</comment>
<comment type="domain">
    <text evidence="5">The transmembrane domains of the small envelope protein M and envelope protein E contain an endoplasmic reticulum retention signal.</text>
</comment>
<comment type="PTM">
    <molecule>Genome polyprotein</molecule>
    <text evidence="5">Specific enzymatic cleavages in vivo yield mature proteins. Cleavages in the lumen of endoplasmic reticulum are performed by host signal peptidase, whereas cleavages in the cytoplasmic side are performed by serine protease NS3. Signal cleavage at the 2K-4B site requires a prior NS3 protease-mediated cleavage at the 4A-2K site.</text>
</comment>
<comment type="PTM">
    <molecule>Protein prM</molecule>
    <text evidence="5">Cleaved in post-Golgi vesicles by a host furin, releasing the mature small envelope protein M, and peptide pr. This cleavage is incomplete as up to 30% of viral particles still carry uncleaved prM.</text>
</comment>
<comment type="PTM">
    <molecule>Envelope protein E</molecule>
    <text evidence="5">N-glycosylated.</text>
</comment>
<comment type="PTM">
    <molecule>Non-structural protein 1</molecule>
    <text evidence="5">N-glycosylated. The excreted form is glycosylated and this is required for efficient secretion of the protein from infected cells.</text>
</comment>
<comment type="PTM">
    <molecule>Serine protease NS3</molecule>
    <text evidence="7">Acetylated by host KAT5. Acetylation modulates NS3 RNA-binding and unwinding activities and plays an important positive role for viral replication.</text>
</comment>
<comment type="PTM">
    <molecule>RNA-directed RNA polymerase NS5</molecule>
    <text evidence="5">Phosphorylated on serines residues. This phosphorylation may trigger NS5 nuclear localization.</text>
</comment>
<comment type="similarity">
    <text evidence="17">In the N-terminal section; belongs to the class I-like SAM-binding methyltransferase superfamily. mRNA cap 0-1 NS5-type methyltransferase family.</text>
</comment>